<keyword id="KW-0007">Acetylation</keyword>
<keyword id="KW-0013">ADP-ribosylation</keyword>
<keyword id="KW-0158">Chromosome</keyword>
<keyword id="KW-0164">Citrullination</keyword>
<keyword id="KW-0238">DNA-binding</keyword>
<keyword id="KW-0539">Nucleus</keyword>
<keyword id="KW-1185">Reference proteome</keyword>
<feature type="chain" id="PRO_0000423208" description="Histone H1.0">
    <location>
        <begin position="1"/>
        <end position="194"/>
    </location>
</feature>
<feature type="initiator methionine" description="Removed; alternate" evidence="1">
    <location>
        <position position="1"/>
    </location>
</feature>
<feature type="chain" id="PRO_0000195913" description="Histone H1.0, N-terminally processed">
    <location>
        <begin position="2"/>
        <end position="194"/>
    </location>
</feature>
<feature type="domain" description="H15" evidence="3">
    <location>
        <begin position="24"/>
        <end position="97"/>
    </location>
</feature>
<feature type="region of interest" description="Disordered" evidence="4">
    <location>
        <begin position="1"/>
        <end position="28"/>
    </location>
</feature>
<feature type="region of interest" description="Disordered" evidence="4">
    <location>
        <begin position="86"/>
        <end position="194"/>
    </location>
</feature>
<feature type="compositionally biased region" description="Low complexity" evidence="4">
    <location>
        <begin position="1"/>
        <end position="11"/>
    </location>
</feature>
<feature type="compositionally biased region" description="Basic residues" evidence="4">
    <location>
        <begin position="105"/>
        <end position="194"/>
    </location>
</feature>
<feature type="modified residue" description="N-acetylmethionine" evidence="1">
    <location>
        <position position="1"/>
    </location>
</feature>
<feature type="modified residue" description="N-acetylthreonine; in Histone H1.0, N-terminally processed" evidence="1">
    <location>
        <position position="2"/>
    </location>
</feature>
<feature type="modified residue" description="Citrulline" evidence="2">
    <location>
        <position position="42"/>
    </location>
</feature>
<feature type="modified residue" description="ADP-ribosylserine" evidence="1">
    <location>
        <position position="104"/>
    </location>
</feature>
<feature type="sequence conflict" description="In Ref. 1; CAA31569." evidence="5" ref="1">
    <original>D</original>
    <variation>N</variation>
    <location>
        <position position="65"/>
    </location>
</feature>
<feature type="sequence conflict" description="In Ref. 1; CAA31569." evidence="5" ref="1">
    <original>A</original>
    <variation>G</variation>
    <location>
        <position position="190"/>
    </location>
</feature>
<proteinExistence type="evidence at transcript level"/>
<name>H10_MOUSE</name>
<reference key="1">
    <citation type="journal article" date="1988" name="EMBO J.">
        <title>Early increase in histone H1(0) mRNA during differentiation of F9 cells to parietal endoderm.</title>
        <authorList>
            <person name="Alonso A."/>
            <person name="Breuer B."/>
            <person name="Bouterfa H."/>
            <person name="Doenecke D."/>
        </authorList>
    </citation>
    <scope>NUCLEOTIDE SEQUENCE [MRNA]</scope>
</reference>
<reference key="2">
    <citation type="journal article" date="1995" name="Mol. Cell. Biol.">
        <title>An upstream control region required for inducible transcription of the mouse H1(zero) histone gene during terminal differentiation.</title>
        <authorList>
            <person name="Dong Y."/>
            <person name="Liu D."/>
            <person name="Skoultchi A.I."/>
        </authorList>
    </citation>
    <scope>NUCLEOTIDE SEQUENCE [GENOMIC DNA]</scope>
    <source>
        <strain>BALB/cJ</strain>
    </source>
</reference>
<reference key="3">
    <citation type="journal article" date="2005" name="Science">
        <title>The transcriptional landscape of the mammalian genome.</title>
        <authorList>
            <person name="Carninci P."/>
            <person name="Kasukawa T."/>
            <person name="Katayama S."/>
            <person name="Gough J."/>
            <person name="Frith M.C."/>
            <person name="Maeda N."/>
            <person name="Oyama R."/>
            <person name="Ravasi T."/>
            <person name="Lenhard B."/>
            <person name="Wells C."/>
            <person name="Kodzius R."/>
            <person name="Shimokawa K."/>
            <person name="Bajic V.B."/>
            <person name="Brenner S.E."/>
            <person name="Batalov S."/>
            <person name="Forrest A.R."/>
            <person name="Zavolan M."/>
            <person name="Davis M.J."/>
            <person name="Wilming L.G."/>
            <person name="Aidinis V."/>
            <person name="Allen J.E."/>
            <person name="Ambesi-Impiombato A."/>
            <person name="Apweiler R."/>
            <person name="Aturaliya R.N."/>
            <person name="Bailey T.L."/>
            <person name="Bansal M."/>
            <person name="Baxter L."/>
            <person name="Beisel K.W."/>
            <person name="Bersano T."/>
            <person name="Bono H."/>
            <person name="Chalk A.M."/>
            <person name="Chiu K.P."/>
            <person name="Choudhary V."/>
            <person name="Christoffels A."/>
            <person name="Clutterbuck D.R."/>
            <person name="Crowe M.L."/>
            <person name="Dalla E."/>
            <person name="Dalrymple B.P."/>
            <person name="de Bono B."/>
            <person name="Della Gatta G."/>
            <person name="di Bernardo D."/>
            <person name="Down T."/>
            <person name="Engstrom P."/>
            <person name="Fagiolini M."/>
            <person name="Faulkner G."/>
            <person name="Fletcher C.F."/>
            <person name="Fukushima T."/>
            <person name="Furuno M."/>
            <person name="Futaki S."/>
            <person name="Gariboldi M."/>
            <person name="Georgii-Hemming P."/>
            <person name="Gingeras T.R."/>
            <person name="Gojobori T."/>
            <person name="Green R.E."/>
            <person name="Gustincich S."/>
            <person name="Harbers M."/>
            <person name="Hayashi Y."/>
            <person name="Hensch T.K."/>
            <person name="Hirokawa N."/>
            <person name="Hill D."/>
            <person name="Huminiecki L."/>
            <person name="Iacono M."/>
            <person name="Ikeo K."/>
            <person name="Iwama A."/>
            <person name="Ishikawa T."/>
            <person name="Jakt M."/>
            <person name="Kanapin A."/>
            <person name="Katoh M."/>
            <person name="Kawasawa Y."/>
            <person name="Kelso J."/>
            <person name="Kitamura H."/>
            <person name="Kitano H."/>
            <person name="Kollias G."/>
            <person name="Krishnan S.P."/>
            <person name="Kruger A."/>
            <person name="Kummerfeld S.K."/>
            <person name="Kurochkin I.V."/>
            <person name="Lareau L.F."/>
            <person name="Lazarevic D."/>
            <person name="Lipovich L."/>
            <person name="Liu J."/>
            <person name="Liuni S."/>
            <person name="McWilliam S."/>
            <person name="Madan Babu M."/>
            <person name="Madera M."/>
            <person name="Marchionni L."/>
            <person name="Matsuda H."/>
            <person name="Matsuzawa S."/>
            <person name="Miki H."/>
            <person name="Mignone F."/>
            <person name="Miyake S."/>
            <person name="Morris K."/>
            <person name="Mottagui-Tabar S."/>
            <person name="Mulder N."/>
            <person name="Nakano N."/>
            <person name="Nakauchi H."/>
            <person name="Ng P."/>
            <person name="Nilsson R."/>
            <person name="Nishiguchi S."/>
            <person name="Nishikawa S."/>
            <person name="Nori F."/>
            <person name="Ohara O."/>
            <person name="Okazaki Y."/>
            <person name="Orlando V."/>
            <person name="Pang K.C."/>
            <person name="Pavan W.J."/>
            <person name="Pavesi G."/>
            <person name="Pesole G."/>
            <person name="Petrovsky N."/>
            <person name="Piazza S."/>
            <person name="Reed J."/>
            <person name="Reid J.F."/>
            <person name="Ring B.Z."/>
            <person name="Ringwald M."/>
            <person name="Rost B."/>
            <person name="Ruan Y."/>
            <person name="Salzberg S.L."/>
            <person name="Sandelin A."/>
            <person name="Schneider C."/>
            <person name="Schoenbach C."/>
            <person name="Sekiguchi K."/>
            <person name="Semple C.A."/>
            <person name="Seno S."/>
            <person name="Sessa L."/>
            <person name="Sheng Y."/>
            <person name="Shibata Y."/>
            <person name="Shimada H."/>
            <person name="Shimada K."/>
            <person name="Silva D."/>
            <person name="Sinclair B."/>
            <person name="Sperling S."/>
            <person name="Stupka E."/>
            <person name="Sugiura K."/>
            <person name="Sultana R."/>
            <person name="Takenaka Y."/>
            <person name="Taki K."/>
            <person name="Tammoja K."/>
            <person name="Tan S.L."/>
            <person name="Tang S."/>
            <person name="Taylor M.S."/>
            <person name="Tegner J."/>
            <person name="Teichmann S.A."/>
            <person name="Ueda H.R."/>
            <person name="van Nimwegen E."/>
            <person name="Verardo R."/>
            <person name="Wei C.L."/>
            <person name="Yagi K."/>
            <person name="Yamanishi H."/>
            <person name="Zabarovsky E."/>
            <person name="Zhu S."/>
            <person name="Zimmer A."/>
            <person name="Hide W."/>
            <person name="Bult C."/>
            <person name="Grimmond S.M."/>
            <person name="Teasdale R.D."/>
            <person name="Liu E.T."/>
            <person name="Brusic V."/>
            <person name="Quackenbush J."/>
            <person name="Wahlestedt C."/>
            <person name="Mattick J.S."/>
            <person name="Hume D.A."/>
            <person name="Kai C."/>
            <person name="Sasaki D."/>
            <person name="Tomaru Y."/>
            <person name="Fukuda S."/>
            <person name="Kanamori-Katayama M."/>
            <person name="Suzuki M."/>
            <person name="Aoki J."/>
            <person name="Arakawa T."/>
            <person name="Iida J."/>
            <person name="Imamura K."/>
            <person name="Itoh M."/>
            <person name="Kato T."/>
            <person name="Kawaji H."/>
            <person name="Kawagashira N."/>
            <person name="Kawashima T."/>
            <person name="Kojima M."/>
            <person name="Kondo S."/>
            <person name="Konno H."/>
            <person name="Nakano K."/>
            <person name="Ninomiya N."/>
            <person name="Nishio T."/>
            <person name="Okada M."/>
            <person name="Plessy C."/>
            <person name="Shibata K."/>
            <person name="Shiraki T."/>
            <person name="Suzuki S."/>
            <person name="Tagami M."/>
            <person name="Waki K."/>
            <person name="Watahiki A."/>
            <person name="Okamura-Oho Y."/>
            <person name="Suzuki H."/>
            <person name="Kawai J."/>
            <person name="Hayashizaki Y."/>
        </authorList>
    </citation>
    <scope>NUCLEOTIDE SEQUENCE [LARGE SCALE MRNA]</scope>
    <source>
        <strain>C57BL/6J</strain>
        <tissue>Blastocyst</tissue>
        <tissue>Placenta</tissue>
        <tissue>Spinal ganglion</tissue>
    </source>
</reference>
<reference key="4">
    <citation type="journal article" date="2004" name="Genome Res.">
        <title>The status, quality, and expansion of the NIH full-length cDNA project: the Mammalian Gene Collection (MGC).</title>
        <authorList>
            <consortium name="The MGC Project Team"/>
        </authorList>
    </citation>
    <scope>NUCLEOTIDE SEQUENCE [LARGE SCALE MRNA]</scope>
    <source>
        <strain>FVB/N</strain>
        <tissue>Mammary tumor</tissue>
        <tissue>Salivary gland</tissue>
    </source>
</reference>
<reference key="5">
    <citation type="journal article" date="1990" name="Oncogene">
        <title>Complexity of the immediate early response of myeloid cells to terminal differentiation and growth arrest includes ICAM-1, Jun-B and histone variants.</title>
        <authorList>
            <person name="Lord K.A."/>
            <person name="Hoffman-Liebermann B."/>
            <person name="Liebermann D.A."/>
        </authorList>
    </citation>
    <scope>NUCLEOTIDE SEQUENCE [MRNA] OF 2-42</scope>
</reference>
<comment type="function">
    <text>Histones H1 are necessary for the condensation of nucleosome chains into higher-order structures. The histones H1.0 are found in cells that are in terminal stages of differentiation or that have low rates of cell division.</text>
</comment>
<comment type="subcellular location">
    <subcellularLocation>
        <location>Nucleus</location>
    </subcellularLocation>
    <subcellularLocation>
        <location>Chromosome</location>
    </subcellularLocation>
</comment>
<comment type="PTM">
    <text evidence="1">ADP-ribosylated on Ser-104 in response to DNA damage.</text>
</comment>
<comment type="similarity">
    <text evidence="3">Belongs to the histone H1/H5 family.</text>
</comment>
<evidence type="ECO:0000250" key="1">
    <source>
        <dbReference type="UniProtKB" id="P07305"/>
    </source>
</evidence>
<evidence type="ECO:0000250" key="2">
    <source>
        <dbReference type="UniProtKB" id="P43275"/>
    </source>
</evidence>
<evidence type="ECO:0000255" key="3">
    <source>
        <dbReference type="PROSITE-ProRule" id="PRU00837"/>
    </source>
</evidence>
<evidence type="ECO:0000256" key="4">
    <source>
        <dbReference type="SAM" id="MobiDB-lite"/>
    </source>
</evidence>
<evidence type="ECO:0000305" key="5"/>
<gene>
    <name type="primary">H1-0</name>
    <name type="synonym">H1f0</name>
    <name type="synonym">H1fv</name>
</gene>
<dbReference type="EMBL" id="X13171">
    <property type="protein sequence ID" value="CAA31569.1"/>
    <property type="molecule type" value="mRNA"/>
</dbReference>
<dbReference type="EMBL" id="U18295">
    <property type="protein sequence ID" value="AAA69911.1"/>
    <property type="molecule type" value="Genomic_DNA"/>
</dbReference>
<dbReference type="EMBL" id="AK051213">
    <property type="protein sequence ID" value="BAC34559.1"/>
    <property type="molecule type" value="mRNA"/>
</dbReference>
<dbReference type="EMBL" id="AK077473">
    <property type="protein sequence ID" value="BAC36817.1"/>
    <property type="molecule type" value="mRNA"/>
</dbReference>
<dbReference type="EMBL" id="AK145675">
    <property type="protein sequence ID" value="BAE26583.1"/>
    <property type="molecule type" value="mRNA"/>
</dbReference>
<dbReference type="EMBL" id="AK146077">
    <property type="protein sequence ID" value="BAE26881.1"/>
    <property type="molecule type" value="mRNA"/>
</dbReference>
<dbReference type="EMBL" id="BC003830">
    <property type="protein sequence ID" value="AAH03830.1"/>
    <property type="molecule type" value="mRNA"/>
</dbReference>
<dbReference type="EMBL" id="BC011493">
    <property type="protein sequence ID" value="AAH11493.1"/>
    <property type="molecule type" value="mRNA"/>
</dbReference>
<dbReference type="EMBL" id="BC110361">
    <property type="protein sequence ID" value="AAI10362.1"/>
    <property type="molecule type" value="mRNA"/>
</dbReference>
<dbReference type="CCDS" id="CCDS56990.1"/>
<dbReference type="PIR" id="I49150">
    <property type="entry name" value="I49150"/>
</dbReference>
<dbReference type="RefSeq" id="NP_032223.2">
    <property type="nucleotide sequence ID" value="NM_008197.3"/>
</dbReference>
<dbReference type="SMR" id="P10922"/>
<dbReference type="BioGRID" id="200145">
    <property type="interactions" value="14"/>
</dbReference>
<dbReference type="FunCoup" id="P10922">
    <property type="interactions" value="379"/>
</dbReference>
<dbReference type="IntAct" id="P10922">
    <property type="interactions" value="9"/>
</dbReference>
<dbReference type="MINT" id="P10922"/>
<dbReference type="STRING" id="10090.ENSMUSP00000137309"/>
<dbReference type="GlyGen" id="P10922">
    <property type="glycosylation" value="2 sites, 1 N-linked glycan (1 site), 1 O-linked glycan (1 site)"/>
</dbReference>
<dbReference type="iPTMnet" id="P10922"/>
<dbReference type="MetOSite" id="P10922"/>
<dbReference type="PhosphoSitePlus" id="P10922"/>
<dbReference type="SwissPalm" id="P10922"/>
<dbReference type="jPOST" id="P10922"/>
<dbReference type="PaxDb" id="10090-ENSMUSP00000137309"/>
<dbReference type="PeptideAtlas" id="P10922"/>
<dbReference type="ProteomicsDB" id="269665"/>
<dbReference type="Pumba" id="P10922"/>
<dbReference type="TopDownProteomics" id="P10922"/>
<dbReference type="ABCD" id="P10922">
    <property type="antibodies" value="2 sequenced antibodies"/>
</dbReference>
<dbReference type="Antibodypedia" id="211">
    <property type="antibodies" value="734 antibodies from 34 providers"/>
</dbReference>
<dbReference type="DNASU" id="14958"/>
<dbReference type="Ensembl" id="ENSMUST00000180086.3">
    <property type="protein sequence ID" value="ENSMUSP00000137309.2"/>
    <property type="gene ID" value="ENSMUSG00000096210.3"/>
</dbReference>
<dbReference type="GeneID" id="14958"/>
<dbReference type="KEGG" id="mmu:14958"/>
<dbReference type="UCSC" id="uc007wsd.1">
    <property type="organism name" value="mouse"/>
</dbReference>
<dbReference type="AGR" id="MGI:95893"/>
<dbReference type="CTD" id="14958"/>
<dbReference type="MGI" id="MGI:95893">
    <property type="gene designation" value="H1f0"/>
</dbReference>
<dbReference type="VEuPathDB" id="HostDB:ENSMUSG00000096210"/>
<dbReference type="eggNOG" id="KOG4012">
    <property type="taxonomic scope" value="Eukaryota"/>
</dbReference>
<dbReference type="GeneTree" id="ENSGT00810000125570"/>
<dbReference type="HOGENOM" id="CLU_052897_1_1_1"/>
<dbReference type="InParanoid" id="P10922"/>
<dbReference type="OMA" id="IKNHYKV"/>
<dbReference type="OrthoDB" id="1110759at2759"/>
<dbReference type="PhylomeDB" id="P10922"/>
<dbReference type="TreeFam" id="TF313664"/>
<dbReference type="Reactome" id="R-MMU-140342">
    <property type="pathway name" value="Apoptosis induced DNA fragmentation"/>
</dbReference>
<dbReference type="Reactome" id="R-MMU-2559584">
    <property type="pathway name" value="Formation of Senescence-Associated Heterochromatin Foci (SAHF)"/>
</dbReference>
<dbReference type="BioGRID-ORCS" id="14958">
    <property type="hits" value="3 hits in 80 CRISPR screens"/>
</dbReference>
<dbReference type="ChiTaRS" id="H1f0">
    <property type="organism name" value="mouse"/>
</dbReference>
<dbReference type="PRO" id="PR:P10922"/>
<dbReference type="Proteomes" id="UP000000589">
    <property type="component" value="Chromosome 15"/>
</dbReference>
<dbReference type="RNAct" id="P10922">
    <property type="molecule type" value="protein"/>
</dbReference>
<dbReference type="Bgee" id="ENSMUSG00000096210">
    <property type="expression patterns" value="Expressed in medial ganglionic eminence and 264 other cell types or tissues"/>
</dbReference>
<dbReference type="GO" id="GO:0015629">
    <property type="term" value="C:actin cytoskeleton"/>
    <property type="evidence" value="ECO:0007669"/>
    <property type="project" value="Ensembl"/>
</dbReference>
<dbReference type="GO" id="GO:0000791">
    <property type="term" value="C:euchromatin"/>
    <property type="evidence" value="ECO:0007669"/>
    <property type="project" value="Ensembl"/>
</dbReference>
<dbReference type="GO" id="GO:0005794">
    <property type="term" value="C:Golgi apparatus"/>
    <property type="evidence" value="ECO:0007669"/>
    <property type="project" value="Ensembl"/>
</dbReference>
<dbReference type="GO" id="GO:0016604">
    <property type="term" value="C:nuclear body"/>
    <property type="evidence" value="ECO:0007669"/>
    <property type="project" value="Ensembl"/>
</dbReference>
<dbReference type="GO" id="GO:0000786">
    <property type="term" value="C:nucleosome"/>
    <property type="evidence" value="ECO:0007669"/>
    <property type="project" value="InterPro"/>
</dbReference>
<dbReference type="GO" id="GO:0005634">
    <property type="term" value="C:nucleus"/>
    <property type="evidence" value="ECO:0000314"/>
    <property type="project" value="UniProtKB"/>
</dbReference>
<dbReference type="GO" id="GO:0017053">
    <property type="term" value="C:transcription repressor complex"/>
    <property type="evidence" value="ECO:0007669"/>
    <property type="project" value="Ensembl"/>
</dbReference>
<dbReference type="GO" id="GO:0031490">
    <property type="term" value="F:chromatin DNA binding"/>
    <property type="evidence" value="ECO:0007669"/>
    <property type="project" value="Ensembl"/>
</dbReference>
<dbReference type="GO" id="GO:0003677">
    <property type="term" value="F:DNA binding"/>
    <property type="evidence" value="ECO:0000269"/>
    <property type="project" value="DisProt"/>
</dbReference>
<dbReference type="GO" id="GO:0003690">
    <property type="term" value="F:double-stranded DNA binding"/>
    <property type="evidence" value="ECO:0000315"/>
    <property type="project" value="CAFA"/>
</dbReference>
<dbReference type="GO" id="GO:0003680">
    <property type="term" value="F:minor groove of adenine-thymine-rich DNA binding"/>
    <property type="evidence" value="ECO:0000315"/>
    <property type="project" value="CAFA"/>
</dbReference>
<dbReference type="GO" id="GO:0031491">
    <property type="term" value="F:nucleosome binding"/>
    <property type="evidence" value="ECO:0007669"/>
    <property type="project" value="Ensembl"/>
</dbReference>
<dbReference type="GO" id="GO:0030527">
    <property type="term" value="F:structural constituent of chromatin"/>
    <property type="evidence" value="ECO:0007669"/>
    <property type="project" value="InterPro"/>
</dbReference>
<dbReference type="GO" id="GO:0031507">
    <property type="term" value="P:heterochromatin formation"/>
    <property type="evidence" value="ECO:0007669"/>
    <property type="project" value="Ensembl"/>
</dbReference>
<dbReference type="GO" id="GO:0006334">
    <property type="term" value="P:nucleosome assembly"/>
    <property type="evidence" value="ECO:0007669"/>
    <property type="project" value="InterPro"/>
</dbReference>
<dbReference type="CDD" id="cd00073">
    <property type="entry name" value="H15"/>
    <property type="match status" value="1"/>
</dbReference>
<dbReference type="FunFam" id="1.10.10.10:FF:000140">
    <property type="entry name" value="Histone H1.0"/>
    <property type="match status" value="1"/>
</dbReference>
<dbReference type="Gene3D" id="1.10.10.10">
    <property type="entry name" value="Winged helix-like DNA-binding domain superfamily/Winged helix DNA-binding domain"/>
    <property type="match status" value="1"/>
</dbReference>
<dbReference type="InterPro" id="IPR005819">
    <property type="entry name" value="H1/H5"/>
</dbReference>
<dbReference type="InterPro" id="IPR005818">
    <property type="entry name" value="Histone_H1/H5_H15"/>
</dbReference>
<dbReference type="InterPro" id="IPR036388">
    <property type="entry name" value="WH-like_DNA-bd_sf"/>
</dbReference>
<dbReference type="InterPro" id="IPR036390">
    <property type="entry name" value="WH_DNA-bd_sf"/>
</dbReference>
<dbReference type="PANTHER" id="PTHR11467">
    <property type="entry name" value="HISTONE H1"/>
    <property type="match status" value="1"/>
</dbReference>
<dbReference type="PANTHER" id="PTHR11467:SF182">
    <property type="entry name" value="HISTONE H1.0"/>
    <property type="match status" value="1"/>
</dbReference>
<dbReference type="Pfam" id="PF00538">
    <property type="entry name" value="Linker_histone"/>
    <property type="match status" value="1"/>
</dbReference>
<dbReference type="PRINTS" id="PR00624">
    <property type="entry name" value="HISTONEH5"/>
</dbReference>
<dbReference type="SMART" id="SM00526">
    <property type="entry name" value="H15"/>
    <property type="match status" value="1"/>
</dbReference>
<dbReference type="SUPFAM" id="SSF46785">
    <property type="entry name" value="Winged helix' DNA-binding domain"/>
    <property type="match status" value="1"/>
</dbReference>
<dbReference type="PROSITE" id="PS51504">
    <property type="entry name" value="H15"/>
    <property type="match status" value="1"/>
</dbReference>
<accession>P10922</accession>
<accession>Q3UKC0</accession>
<sequence length="194" mass="20861">MTENSTSAPAAKPKRAKASKKSTDHPKYSDMIVAAIQAEKNRAGSSRQSIQKYIKSHYKVGENADSQIKLSIKRLVTTGVLKQTKGVGASGSFRLAKGDEPKRSVAFKKTKKEVKKVATPKKAAKPKKAASKAPSKKPKATPVKKAKKKPAATPKKAKKPKVVKVKPVKASKPKKAKTVKPKAKSSAKRASKKK</sequence>
<protein>
    <recommendedName>
        <fullName>Histone H1.0</fullName>
    </recommendedName>
    <alternativeName>
        <fullName>Histone H1'</fullName>
    </alternativeName>
    <alternativeName>
        <fullName>Histone H1(0)</fullName>
    </alternativeName>
    <alternativeName>
        <fullName>MyD196</fullName>
    </alternativeName>
    <component>
        <recommendedName>
            <fullName>Histone H1.0, N-terminally processed</fullName>
        </recommendedName>
    </component>
</protein>
<organism>
    <name type="scientific">Mus musculus</name>
    <name type="common">Mouse</name>
    <dbReference type="NCBI Taxonomy" id="10090"/>
    <lineage>
        <taxon>Eukaryota</taxon>
        <taxon>Metazoa</taxon>
        <taxon>Chordata</taxon>
        <taxon>Craniata</taxon>
        <taxon>Vertebrata</taxon>
        <taxon>Euteleostomi</taxon>
        <taxon>Mammalia</taxon>
        <taxon>Eutheria</taxon>
        <taxon>Euarchontoglires</taxon>
        <taxon>Glires</taxon>
        <taxon>Rodentia</taxon>
        <taxon>Myomorpha</taxon>
        <taxon>Muroidea</taxon>
        <taxon>Muridae</taxon>
        <taxon>Murinae</taxon>
        <taxon>Mus</taxon>
        <taxon>Mus</taxon>
    </lineage>
</organism>